<proteinExistence type="evidence at protein level"/>
<reference key="1">
    <citation type="journal article" date="1997" name="Plant Physiol.">
        <title>Differential expression of the multigene family encoding the soybean mitochondrial alternative oxidase.</title>
        <authorList>
            <person name="Finnegan P.M."/>
            <person name="Whelan J."/>
            <person name="Millar A.H."/>
            <person name="Zhang Q."/>
            <person name="Smith M.K."/>
            <person name="Wiskich J.T."/>
            <person name="Day D.A."/>
        </authorList>
    </citation>
    <scope>NUCLEOTIDE SEQUENCE [MRNA]</scope>
    <scope>PARTIAL PROTEIN SEQUENCE</scope>
</reference>
<reference key="2">
    <citation type="journal article" date="1998" name="Plant Physiol.">
        <title>Differential expression of alternative oxidase genes in soybean cotyledons during postgerminative development.</title>
        <authorList>
            <person name="McCabe T.C."/>
            <person name="Finnegan P.M."/>
            <person name="Harvey Millar A."/>
            <person name="Day D.A."/>
            <person name="Whelan J."/>
        </authorList>
    </citation>
    <scope>DEVELOPMENTAL STAGE</scope>
</reference>
<reference key="3">
    <citation type="journal article" date="1999" name="FEBS Lett.">
        <title>A revised model of the active site of alternative oxidase.</title>
        <authorList>
            <person name="Andersson M.E."/>
            <person name="Nordlund P."/>
        </authorList>
    </citation>
    <scope>IRON-BINDING SITES</scope>
</reference>
<reference key="4">
    <citation type="journal article" date="1999" name="FEBS Lett.">
        <title>A single amino acid change in the plant alternative oxidase alters the specificity of organic acid activation.</title>
        <authorList>
            <person name="Djajanegara I."/>
            <person name="Holtzapffel R."/>
            <person name="Finnegan P.M."/>
            <person name="Hoefnagel M.H."/>
            <person name="Berthold D.A."/>
            <person name="Wiskich J.T."/>
            <person name="Day D.A."/>
        </authorList>
    </citation>
    <scope>MUTAGENESIS OF CYS-99</scope>
    <scope>DISULFIDE BOND</scope>
    <scope>ACTIVITY REGULATION</scope>
</reference>
<protein>
    <recommendedName>
        <fullName>Alternative oxidase 3, mitochondrial</fullName>
        <ecNumber>1.10.3.11</ecNumber>
    </recommendedName>
</protein>
<comment type="function">
    <text evidence="1">Catalyzes the cyanide-resistant oxidation of ubiquinol and the reduction of molecular oxygen to water, but does not translocate protons and consequently is not linked to oxidative phosphorylation. May increase respiration when the cytochrome respiratory pathway is restricted, or in response to low temperatures (By similarity).</text>
</comment>
<comment type="catalytic activity">
    <reaction>
        <text>2 a ubiquinol + O2 = 2 a ubiquinone + 2 H2O</text>
        <dbReference type="Rhea" id="RHEA:30255"/>
        <dbReference type="Rhea" id="RHEA-COMP:9565"/>
        <dbReference type="Rhea" id="RHEA-COMP:9566"/>
        <dbReference type="ChEBI" id="CHEBI:15377"/>
        <dbReference type="ChEBI" id="CHEBI:15379"/>
        <dbReference type="ChEBI" id="CHEBI:16389"/>
        <dbReference type="ChEBI" id="CHEBI:17976"/>
        <dbReference type="EC" id="1.10.3.11"/>
    </reaction>
</comment>
<comment type="cofactor">
    <cofactor evidence="3">
        <name>Fe cation</name>
        <dbReference type="ChEBI" id="CHEBI:24875"/>
    </cofactor>
    <text evidence="3">Binds 2 iron ions per subunit.</text>
</comment>
<comment type="subunit">
    <text evidence="5">Homodimer; disulfide-linked.</text>
</comment>
<comment type="subcellular location">
    <subcellularLocation>
        <location evidence="7">Mitochondrion inner membrane</location>
        <topology evidence="7">Multi-pass membrane protein</topology>
    </subcellularLocation>
    <text>Mitochondrial, possibly in the inner surface of the inner mitochondrial membrane.</text>
</comment>
<comment type="developmental stage">
    <text evidence="6">Continuous increase of expression in developing cotyledons until day 20.</text>
</comment>
<comment type="similarity">
    <text evidence="7">Belongs to the alternative oxidase family.</text>
</comment>
<organism>
    <name type="scientific">Glycine max</name>
    <name type="common">Soybean</name>
    <name type="synonym">Glycine hispida</name>
    <dbReference type="NCBI Taxonomy" id="3847"/>
    <lineage>
        <taxon>Eukaryota</taxon>
        <taxon>Viridiplantae</taxon>
        <taxon>Streptophyta</taxon>
        <taxon>Embryophyta</taxon>
        <taxon>Tracheophyta</taxon>
        <taxon>Spermatophyta</taxon>
        <taxon>Magnoliopsida</taxon>
        <taxon>eudicotyledons</taxon>
        <taxon>Gunneridae</taxon>
        <taxon>Pentapetalae</taxon>
        <taxon>rosids</taxon>
        <taxon>fabids</taxon>
        <taxon>Fabales</taxon>
        <taxon>Fabaceae</taxon>
        <taxon>Papilionoideae</taxon>
        <taxon>50 kb inversion clade</taxon>
        <taxon>NPAAA clade</taxon>
        <taxon>indigoferoid/millettioid clade</taxon>
        <taxon>Phaseoleae</taxon>
        <taxon>Glycine</taxon>
        <taxon>Glycine subgen. Soja</taxon>
    </lineage>
</organism>
<accession>O03376</accession>
<feature type="transit peptide" description="Mitochondrion" evidence="4">
    <location>
        <begin position="1"/>
        <end status="unknown"/>
    </location>
</feature>
<feature type="chain" id="PRO_0000001739" description="Alternative oxidase 3, mitochondrial">
    <location>
        <begin status="unknown"/>
        <end position="326"/>
    </location>
</feature>
<feature type="transmembrane region" description="Helical" evidence="4">
    <location>
        <begin position="151"/>
        <end position="171"/>
    </location>
</feature>
<feature type="transmembrane region" description="Helical" evidence="4">
    <location>
        <begin position="213"/>
        <end position="233"/>
    </location>
</feature>
<feature type="binding site" evidence="2">
    <location>
        <position position="155"/>
    </location>
    <ligand>
        <name>Fe cation</name>
        <dbReference type="ChEBI" id="CHEBI:24875"/>
        <label>1</label>
    </ligand>
</feature>
<feature type="binding site" evidence="2">
    <location>
        <position position="194"/>
    </location>
    <ligand>
        <name>Fe cation</name>
        <dbReference type="ChEBI" id="CHEBI:24875"/>
        <label>1</label>
    </ligand>
</feature>
<feature type="binding site" evidence="2">
    <location>
        <position position="194"/>
    </location>
    <ligand>
        <name>Fe cation</name>
        <dbReference type="ChEBI" id="CHEBI:24875"/>
        <label>2</label>
    </ligand>
</feature>
<feature type="binding site" evidence="2">
    <location>
        <position position="197"/>
    </location>
    <ligand>
        <name>Fe cation</name>
        <dbReference type="ChEBI" id="CHEBI:24875"/>
        <label>1</label>
    </ligand>
</feature>
<feature type="binding site" evidence="2">
    <location>
        <position position="245"/>
    </location>
    <ligand>
        <name>Fe cation</name>
        <dbReference type="ChEBI" id="CHEBI:24875"/>
        <label>2</label>
    </ligand>
</feature>
<feature type="binding site" evidence="2">
    <location>
        <position position="296"/>
    </location>
    <ligand>
        <name>Fe cation</name>
        <dbReference type="ChEBI" id="CHEBI:24875"/>
        <label>1</label>
    </ligand>
</feature>
<feature type="binding site" evidence="2">
    <location>
        <position position="296"/>
    </location>
    <ligand>
        <name>Fe cation</name>
        <dbReference type="ChEBI" id="CHEBI:24875"/>
        <label>2</label>
    </ligand>
</feature>
<feature type="binding site" evidence="2">
    <location>
        <position position="299"/>
    </location>
    <ligand>
        <name>Fe cation</name>
        <dbReference type="ChEBI" id="CHEBI:24875"/>
        <label>2</label>
    </ligand>
</feature>
<feature type="disulfide bond" description="Interchain" evidence="5">
    <location>
        <position position="99"/>
    </location>
</feature>
<feature type="mutagenesis site" description="Loss of oxidative inactivation and stimulation by pyruvate, but can be activated by succinate." evidence="5">
    <original>C</original>
    <variation>S</variation>
    <location>
        <position position="99"/>
    </location>
</feature>
<name>AOX3_SOYBN</name>
<gene>
    <name type="primary">AOX3</name>
</gene>
<evidence type="ECO:0000250" key="1"/>
<evidence type="ECO:0000250" key="2">
    <source>
        <dbReference type="UniProtKB" id="Q26710"/>
    </source>
</evidence>
<evidence type="ECO:0000250" key="3">
    <source>
        <dbReference type="UniProtKB" id="Q39219"/>
    </source>
</evidence>
<evidence type="ECO:0000255" key="4"/>
<evidence type="ECO:0000269" key="5">
    <source>
    </source>
</evidence>
<evidence type="ECO:0000269" key="6">
    <source>
    </source>
</evidence>
<evidence type="ECO:0000305" key="7"/>
<dbReference type="EC" id="1.10.3.11"/>
<dbReference type="EMBL" id="U87907">
    <property type="protein sequence ID" value="AAB97286.1"/>
    <property type="molecule type" value="mRNA"/>
</dbReference>
<dbReference type="PIR" id="T08849">
    <property type="entry name" value="T08849"/>
</dbReference>
<dbReference type="RefSeq" id="NP_001238460.1">
    <property type="nucleotide sequence ID" value="NM_001251531.1"/>
</dbReference>
<dbReference type="SMR" id="O03376"/>
<dbReference type="STRING" id="3847.O03376"/>
<dbReference type="PaxDb" id="3847-GLYMA08G07690.1"/>
<dbReference type="GeneID" id="548077"/>
<dbReference type="KEGG" id="gmx:548077"/>
<dbReference type="eggNOG" id="ENOG502QSB5">
    <property type="taxonomic scope" value="Eukaryota"/>
</dbReference>
<dbReference type="InParanoid" id="O03376"/>
<dbReference type="OrthoDB" id="16906at2759"/>
<dbReference type="Proteomes" id="UP000008827">
    <property type="component" value="Unplaced"/>
</dbReference>
<dbReference type="GO" id="GO:0005743">
    <property type="term" value="C:mitochondrial inner membrane"/>
    <property type="evidence" value="ECO:0007669"/>
    <property type="project" value="UniProtKB-SubCell"/>
</dbReference>
<dbReference type="GO" id="GO:0005739">
    <property type="term" value="C:mitochondrion"/>
    <property type="evidence" value="ECO:0000318"/>
    <property type="project" value="GO_Central"/>
</dbReference>
<dbReference type="GO" id="GO:0009916">
    <property type="term" value="F:alternative oxidase activity"/>
    <property type="evidence" value="ECO:0000318"/>
    <property type="project" value="GO_Central"/>
</dbReference>
<dbReference type="GO" id="GO:0046872">
    <property type="term" value="F:metal ion binding"/>
    <property type="evidence" value="ECO:0007669"/>
    <property type="project" value="UniProtKB-KW"/>
</dbReference>
<dbReference type="GO" id="GO:0106292">
    <property type="term" value="F:superoxide-generating NADPH oxidase activity"/>
    <property type="evidence" value="ECO:0007669"/>
    <property type="project" value="UniProtKB-ARBA"/>
</dbReference>
<dbReference type="GO" id="GO:0102721">
    <property type="term" value="F:ubiquinol:oxygen oxidoreductase activity"/>
    <property type="evidence" value="ECO:0007669"/>
    <property type="project" value="UniProtKB-EC"/>
</dbReference>
<dbReference type="GO" id="GO:0010230">
    <property type="term" value="P:alternative respiration"/>
    <property type="evidence" value="ECO:0000318"/>
    <property type="project" value="GO_Central"/>
</dbReference>
<dbReference type="CDD" id="cd01053">
    <property type="entry name" value="AOX"/>
    <property type="match status" value="1"/>
</dbReference>
<dbReference type="FunFam" id="1.20.1260.140:FF:000001">
    <property type="entry name" value="Ubiquinol oxidase"/>
    <property type="match status" value="1"/>
</dbReference>
<dbReference type="Gene3D" id="1.20.1260.140">
    <property type="entry name" value="Alternative oxidase"/>
    <property type="match status" value="1"/>
</dbReference>
<dbReference type="InterPro" id="IPR002680">
    <property type="entry name" value="AOX"/>
</dbReference>
<dbReference type="InterPro" id="IPR038659">
    <property type="entry name" value="AOX_sf"/>
</dbReference>
<dbReference type="PANTHER" id="PTHR31803">
    <property type="entry name" value="ALTERNATIVE OXIDASE"/>
    <property type="match status" value="1"/>
</dbReference>
<dbReference type="PANTHER" id="PTHR31803:SF20">
    <property type="entry name" value="ALTERNATIVE OXIDASE 3, MITOCHONDRIAL"/>
    <property type="match status" value="1"/>
</dbReference>
<dbReference type="Pfam" id="PF01786">
    <property type="entry name" value="AOX"/>
    <property type="match status" value="1"/>
</dbReference>
<sequence length="326" mass="37057">MKNVLVRSAARALLGGGGRSYYRQLSTAAIVEQRHQHGGGAFGSFHLRRMSTLPEVKDQHSEEKKNEVNGTSNAVVTSYWGITRPKVRREDGTEWPWNCFMPWDSYHSDVSIDVTKHHTPKSLTDKVAFRAVKFLRVLSDIYFKERYGCHAMMLETIAAVPGMVGGMLLHLKSLRKFQHSGGWIKALLEEAENERMHLMTMVELVKPSWHERLLIFTAQGVFFNAFFVFYLLSPKAAHRFVGYLEEEAVISYTQHLNAIESGKVENVPAPAIAIDYWRLPKDATLKDVVTVIRADEAHHRDVNHFASDIHHQGKELKEAPAPIGYH</sequence>
<keyword id="KW-0903">Direct protein sequencing</keyword>
<keyword id="KW-1015">Disulfide bond</keyword>
<keyword id="KW-0249">Electron transport</keyword>
<keyword id="KW-0408">Iron</keyword>
<keyword id="KW-0472">Membrane</keyword>
<keyword id="KW-0479">Metal-binding</keyword>
<keyword id="KW-0496">Mitochondrion</keyword>
<keyword id="KW-0999">Mitochondrion inner membrane</keyword>
<keyword id="KW-0560">Oxidoreductase</keyword>
<keyword id="KW-1185">Reference proteome</keyword>
<keyword id="KW-0679">Respiratory chain</keyword>
<keyword id="KW-0809">Transit peptide</keyword>
<keyword id="KW-0812">Transmembrane</keyword>
<keyword id="KW-1133">Transmembrane helix</keyword>
<keyword id="KW-0813">Transport</keyword>